<accession>P0C760</accession>
<accession>I4EPA5</accession>
<gene>
    <name type="primary">L</name>
</gene>
<organism>
    <name type="scientific">Puumala virus (strain Sotkamo/V-2969/81)</name>
    <dbReference type="NCBI Taxonomy" id="39002"/>
    <lineage>
        <taxon>Viruses</taxon>
        <taxon>Riboviria</taxon>
        <taxon>Orthornavirae</taxon>
        <taxon>Negarnaviricota</taxon>
        <taxon>Polyploviricotina</taxon>
        <taxon>Ellioviricetes</taxon>
        <taxon>Bunyavirales</taxon>
        <taxon>Hantaviridae</taxon>
        <taxon>Mammantavirinae</taxon>
        <taxon>Orthohantavirus</taxon>
        <taxon>Orthohantavirus puumalaense</taxon>
    </lineage>
</organism>
<name>L_PUUMS</name>
<proteinExistence type="inferred from homology"/>
<organismHost>
    <name type="scientific">Homo sapiens</name>
    <name type="common">Human</name>
    <dbReference type="NCBI Taxonomy" id="9606"/>
</organismHost>
<organismHost>
    <name type="scientific">Myodes glareolus</name>
    <name type="common">Bank vole</name>
    <name type="synonym">Clethrionomys glareolus</name>
    <dbReference type="NCBI Taxonomy" id="447135"/>
</organismHost>
<dbReference type="EC" id="2.7.7.48"/>
<dbReference type="EC" id="3.1.-.-" evidence="3"/>
<dbReference type="EMBL" id="Z66548">
    <property type="status" value="NOT_ANNOTATED_CDS"/>
    <property type="molecule type" value="Genomic_RNA"/>
</dbReference>
<dbReference type="EMBL" id="HE801635">
    <property type="protein sequence ID" value="CCH22849.1"/>
    <property type="molecule type" value="Genomic_RNA"/>
</dbReference>
<dbReference type="SMR" id="P0C760"/>
<dbReference type="Proteomes" id="UP000008482">
    <property type="component" value="Genome"/>
</dbReference>
<dbReference type="Proteomes" id="UP000110237">
    <property type="component" value="Genome"/>
</dbReference>
<dbReference type="GO" id="GO:0044220">
    <property type="term" value="C:host cell perinuclear region of cytoplasm"/>
    <property type="evidence" value="ECO:0007669"/>
    <property type="project" value="UniProtKB-SubCell"/>
</dbReference>
<dbReference type="GO" id="GO:0004519">
    <property type="term" value="F:endonuclease activity"/>
    <property type="evidence" value="ECO:0007669"/>
    <property type="project" value="UniProtKB-KW"/>
</dbReference>
<dbReference type="GO" id="GO:0046872">
    <property type="term" value="F:metal ion binding"/>
    <property type="evidence" value="ECO:0007669"/>
    <property type="project" value="UniProtKB-KW"/>
</dbReference>
<dbReference type="GO" id="GO:0000166">
    <property type="term" value="F:nucleotide binding"/>
    <property type="evidence" value="ECO:0007669"/>
    <property type="project" value="UniProtKB-KW"/>
</dbReference>
<dbReference type="GO" id="GO:0003968">
    <property type="term" value="F:RNA-directed RNA polymerase activity"/>
    <property type="evidence" value="ECO:0007669"/>
    <property type="project" value="UniProtKB-KW"/>
</dbReference>
<dbReference type="GO" id="GO:0075526">
    <property type="term" value="P:cap snatching"/>
    <property type="evidence" value="ECO:0007669"/>
    <property type="project" value="UniProtKB-KW"/>
</dbReference>
<dbReference type="GO" id="GO:0006351">
    <property type="term" value="P:DNA-templated transcription"/>
    <property type="evidence" value="ECO:0007669"/>
    <property type="project" value="InterPro"/>
</dbReference>
<dbReference type="GO" id="GO:0039689">
    <property type="term" value="P:negative stranded viral RNA replication"/>
    <property type="evidence" value="ECO:0000250"/>
    <property type="project" value="UniProtKB"/>
</dbReference>
<dbReference type="GO" id="GO:0039696">
    <property type="term" value="P:RNA-templated viral transcription"/>
    <property type="evidence" value="ECO:0000250"/>
    <property type="project" value="UniProtKB"/>
</dbReference>
<dbReference type="InterPro" id="IPR048006">
    <property type="entry name" value="CapSnatch_bunyavir"/>
</dbReference>
<dbReference type="InterPro" id="IPR054155">
    <property type="entry name" value="CapSnatchArena_N"/>
</dbReference>
<dbReference type="InterPro" id="IPR016268">
    <property type="entry name" value="RNA-dir_pol_hantavirus"/>
</dbReference>
<dbReference type="InterPro" id="IPR024378">
    <property type="entry name" value="RNA-dir_pol_N_hantavirus"/>
</dbReference>
<dbReference type="InterPro" id="IPR007099">
    <property type="entry name" value="RNA-dir_pol_NSvirus"/>
</dbReference>
<dbReference type="InterPro" id="IPR007322">
    <property type="entry name" value="RNA_pol_bunyavir"/>
</dbReference>
<dbReference type="NCBIfam" id="TIGR04202">
    <property type="entry name" value="capSnatchArena"/>
    <property type="match status" value="1"/>
</dbReference>
<dbReference type="Pfam" id="PF04196">
    <property type="entry name" value="Bunya_RdRp"/>
    <property type="match status" value="1"/>
</dbReference>
<dbReference type="Pfam" id="PF21991">
    <property type="entry name" value="capSnatchArena"/>
    <property type="match status" value="1"/>
</dbReference>
<dbReference type="Pfam" id="PF12426">
    <property type="entry name" value="DUF3674"/>
    <property type="match status" value="1"/>
</dbReference>
<dbReference type="PIRSF" id="PIRSF000825">
    <property type="entry name" value="L_HantaV"/>
    <property type="match status" value="1"/>
</dbReference>
<dbReference type="PROSITE" id="PS50525">
    <property type="entry name" value="RDRP_SSRNA_NEG_SEG"/>
    <property type="match status" value="1"/>
</dbReference>
<reference key="1">
    <citation type="journal article" date="1997" name="Virus Res.">
        <title>Sequence analysis of the Puumala hantavirus Sotkamo strain L segment.</title>
        <authorList>
            <person name="Piiparinen H."/>
            <person name="Vapalahti O."/>
            <person name="Plyusnin A."/>
            <person name="Vaheri A."/>
            <person name="Lankinen H."/>
        </authorList>
    </citation>
    <scope>NUCLEOTIDE SEQUENCE [GENOMIC RNA]</scope>
</reference>
<reference key="2">
    <citation type="journal article" date="2012" name="Virus Genes">
        <title>Resequencing of the Puumala virus strain Sotkamo from the WHO Arbovirus collection.</title>
        <authorList>
            <person name="Kurolt I.C."/>
            <person name="Paessler S."/>
            <person name="Markotic A."/>
        </authorList>
    </citation>
    <scope>NUCLEOTIDE SEQUENCE [GENOMIC RNA]</scope>
    <source>
        <strain>Isolate Sotkamo 2009/WHO Arbovirus collection</strain>
    </source>
</reference>
<reference key="3">
    <citation type="journal article" date="2005" name="Arch. Virol.">
        <title>L protein, the RNA-dependent RNA polymerase of hantaviruses.</title>
        <authorList>
            <person name="Kukkonen S.K."/>
            <person name="Vaheri A."/>
            <person name="Plyusnin A."/>
        </authorList>
    </citation>
    <scope>REVIEW</scope>
</reference>
<reference key="4">
    <citation type="journal article" date="2017" name="Crit. Rev. Microbiol.">
        <title>Bunyaviridae RdRps: structure, motifs, and RNA synthesis machinery.</title>
        <authorList>
            <person name="Amroun A."/>
            <person name="Priet S."/>
            <person name="de Lamballerie X."/>
            <person name="Querat G."/>
        </authorList>
    </citation>
    <scope>REVIEW</scope>
</reference>
<reference key="5">
    <citation type="journal article" date="2020" name="Trends Microbiol.">
        <title>The Cap-Snatching Mechanism of Bunyaviruses.</title>
        <authorList>
            <person name="Olschewski S."/>
            <person name="Cusack S."/>
            <person name="Rosenthal M."/>
        </authorList>
    </citation>
    <scope>REVIEW</scope>
</reference>
<protein>
    <recommendedName>
        <fullName>RNA-directed RNA polymerase L</fullName>
        <shortName>Protein L</shortName>
        <ecNumber>2.7.7.48</ecNumber>
    </recommendedName>
    <alternativeName>
        <fullName>Large structural protein</fullName>
    </alternativeName>
    <alternativeName>
        <fullName evidence="10">RdRp</fullName>
    </alternativeName>
    <alternativeName>
        <fullName>Replicase</fullName>
    </alternativeName>
    <alternativeName>
        <fullName>Transcriptase</fullName>
    </alternativeName>
    <domain>
        <recommendedName>
            <fullName>cap-snatching endonuclease</fullName>
            <ecNumber evidence="3">3.1.-.-</ecNumber>
        </recommendedName>
    </domain>
</protein>
<sequence>MEKYRDIHERVKEAVPGETSAVECLDLLDRLYAVRHDVVDQMIKHDWSDNKDREQPIGLVLLMAGVPNDVIQSMEKRVIPGSPSGQILRSFFKMTPDNYKITGNLIEFIEVTVTADVARGVREKILKYQGGLEFIEQLLQIEAQKGNCQSGFKIKFNVVAVRTDGSNISTQWPSRRNEGVVQAMRLIQADINFVREHLIKNDERGALEAMFNLKFHVTGPKVRTFDIPNYRPQPLCQPILENLVDYCKNWLGTDHAFAFKEVTGQRVFNVFREEEEIHASKYGHSRKPRNFLLCQISLQSPYLPSTIASDQYDTRLACSEILKNYPETPLQLLARDMAYKYITLDHDDIINYYNPRVYFKPTQNIKEPGTFKLNLSNMDPKSKALIDVISKDSKKGVFGELIDSVDVASQVQHNECSKTIEKILSDLEVNLGDVANGLDQPKKTTGVDDILRKFYDNELVKYLISVIRKTTAWHLGHLLRDITESLIAHAGLKRSKYWSAHGYACGSVLLCILPSKSLEVAGSFIRFFTVFKEGLGLIDTDNLDSKAEIDGVSWCFSKIISLDLNRLLALNIAFEKSLLATATWFQYYTEDQGHFPLQHALRSVFAFHFLLSVSQKMKLCAIFDNLRYLIPAVTSTYSGFEPLIRKFFERPFKSALEVYLYGIIKVLLVSLAQNNKIRFYSRVRLLGLTVDQSTIGASGVYPSLMSRVVYKHYRSLISEATTCFFLFEKGLHGNLTEEAKIHLETVEWARKFREKERELGSYIMEEGYHIQDVLNNQVAVEQQLFCQEVVELAAQELNTYLHAKSQVMASNIMNKHWDKPYFSQTRNISLKGMSGALQEDGHLAASVTLIEAIRFLNHSQNNPTVLELYEQTKKQRAQARIVRKYQRTEADRGFFITTLPTRVRLEIIEDYYDAIAKVVPEEYISYGGERKILNIQQALEKALRWASGESEIQSSLGHSIKLKRKLMYVSADATKWSPGDNSAKFRRFTQSLYDGLRDDKLKNCVVDALRNIYETDFFISRKLHRYIDNMGELSDEVLDFLSFFPNKVSASIKGNWLQGNLNKCSSLFGAAISLLFKRVWAKLYPELECFFEFAHHSDDALFIYGYLEPIDDGTEWFQYVTQQIQAGNFHWHAVNQEMWKSMFNLHEHILLMGSIKISPKKTTVSPTNAEFLSTFFEGCAVSIPFIKILLGSLSDLPGLGYFDDLAAAQSRCVKALDMGACPQLAQLGIVLCTSKVERLYGTAPGMVNNPTAYLKVDRNLIPIPLGGDGSMSIMELATAGIGMADKNILKNAFITYKHAKKDNDRYVLGLFKFLMSLSDDIFQHDRLGEFSFVGKVQWKVFTPKSEFEFYDQYSRKYLELWSEQHPVYDYIIPRGRDNLLVYLVRKLNDPSIVTAMTMQSPLQLRFRMQAKQHMKVCKLGGEWVTFREVLAAADAFASEYRPTLQDMELFQTLVNCTFSKEYAWRDFLNEVQCDVLTTRQIHRPKVARTFTVKERDQTIQNPITAVIGYKYASKVDEISDVLDSALHPDSLSTDLQLMREGVYRELGLDISQPNVLKKVAPLLYKSGKSRIVIVQGNVEGTAESICSYWLKTMSLVKTIKVKPKKEVLKAVSLYGKKEKVGDLTHLAAMRLCIEVWRWCKANEQDSVTWLKYLVFENKTLEQWVDLFCSRGVLPIDPEIQCLGLLVYDLKGQKGLLQIQANRRAYSGKQYDAYCVQTYNEETKLYEGDLRVTFNFGIDCARLEIFWDKKEYILETSITQRNVLKILMEEVTKELLRCGMRFKTEQVNSSRSVVLFKTESGFEWGKPNVPCIVYRNCTLRTGLRVRHPTNKAFSITIQANGFRAMAQLDEENPRFLLAHAYHNLKDVRYQALQAVGNVWFKMTQHKLFINPIISAGLLENFMKGLPAAIPPAAYSLIMNKAKISVDLFMFNELLALINPQNVLNLDGIEETSEGFTTVSTISSTQWSEEVSLTLDDSDDDDDASNLDYTIDLDDIDFETIDLKEDIEHFLQDESAYTGDLLIQTEETEVRKLRGMIKILEPVKLIKSWVSKGLSIDKIYNPVNIILMTRYMSKHYNFQAKQLSLMDPYDLTEFESVVKGWGECVKDRFIELDQEAQRKVTEERVLPEDVLPDSFFSFRHADILLKRLFPRDSASSFY</sequence>
<feature type="chain" id="PRO_0000379782" description="RNA-directed RNA polymerase L">
    <location>
        <begin position="1"/>
        <end position="2156"/>
    </location>
</feature>
<feature type="domain" description="RdRp catalytic" evidence="7">
    <location>
        <begin position="956"/>
        <end position="1142"/>
    </location>
</feature>
<feature type="active site" description="For endonuclease activity" evidence="3">
    <location>
        <position position="124"/>
    </location>
</feature>
<feature type="binding site" evidence="5">
    <location>
        <position position="36"/>
    </location>
    <ligand>
        <name>Mn(2+)</name>
        <dbReference type="ChEBI" id="CHEBI:29035"/>
        <label>1</label>
    </ligand>
</feature>
<feature type="binding site" evidence="3">
    <location>
        <position position="54"/>
    </location>
    <ligand>
        <name>Mn(2+)</name>
        <dbReference type="ChEBI" id="CHEBI:29035"/>
        <label>2</label>
    </ligand>
</feature>
<feature type="binding site" evidence="5">
    <location>
        <position position="97"/>
    </location>
    <ligand>
        <name>Mn(2+)</name>
        <dbReference type="ChEBI" id="CHEBI:29035"/>
        <label>1</label>
    </ligand>
</feature>
<feature type="binding site" evidence="5">
    <location>
        <position position="97"/>
    </location>
    <ligand>
        <name>Mn(2+)</name>
        <dbReference type="ChEBI" id="CHEBI:29035"/>
        <label>2</label>
    </ligand>
</feature>
<feature type="binding site" evidence="5">
    <location>
        <position position="110"/>
    </location>
    <ligand>
        <name>Mn(2+)</name>
        <dbReference type="ChEBI" id="CHEBI:29035"/>
        <label>1</label>
    </ligand>
</feature>
<feature type="binding site" evidence="5">
    <location>
        <position position="111"/>
    </location>
    <ligand>
        <name>Mn(2+)</name>
        <dbReference type="ChEBI" id="CHEBI:29035"/>
        <label>1</label>
    </ligand>
</feature>
<feature type="binding site" evidence="2">
    <location>
        <position position="1099"/>
    </location>
    <ligand>
        <name>Mg(2+)</name>
        <dbReference type="ChEBI" id="CHEBI:18420"/>
        <note>catalytic; for RdRp activity</note>
    </ligand>
</feature>
<feature type="sequence variant" description="In strain: isolate Sotkamo 2009/WHO Arbovirus collection.">
    <original>N</original>
    <variation>D</variation>
    <location>
        <position position="157"/>
    </location>
</feature>
<feature type="sequence variant" description="In strain: isolate Sotkamo 2009/WHO Arbovirus collection.">
    <original>T</original>
    <variation>I</variation>
    <location>
        <position position="1477"/>
    </location>
</feature>
<feature type="sequence variant" description="In strain: isolate Sotkamo 2009/WHO Arbovirus collection.">
    <original>R</original>
    <variation>H</variation>
    <location>
        <position position="1776"/>
    </location>
</feature>
<feature type="sequence variant" description="In strain: isolate Sotkamo 2009/WHO Arbovirus collection.">
    <original>F</original>
    <variation>L</variation>
    <location>
        <position position="2133"/>
    </location>
</feature>
<keyword id="KW-1157">Cap snatching</keyword>
<keyword id="KW-0255">Endonuclease</keyword>
<keyword id="KW-1035">Host cytoplasm</keyword>
<keyword id="KW-0378">Hydrolase</keyword>
<keyword id="KW-0460">Magnesium</keyword>
<keyword id="KW-0464">Manganese</keyword>
<keyword id="KW-0479">Metal-binding</keyword>
<keyword id="KW-0540">Nuclease</keyword>
<keyword id="KW-0547">Nucleotide-binding</keyword>
<keyword id="KW-0548">Nucleotidyltransferase</keyword>
<keyword id="KW-1185">Reference proteome</keyword>
<keyword id="KW-0696">RNA-directed RNA polymerase</keyword>
<keyword id="KW-0808">Transferase</keyword>
<keyword id="KW-0693">Viral RNA replication</keyword>
<comment type="function">
    <text evidence="5">RNA-dependent RNA polymerase, which is responsible for the replication and transcription of the viral RNA genome using antigenomic RNA as an intermediate (By similarity). During transcription, synthesizes subgenomic RNAs and assures their capping by a cap-snatching mechanism, which involves the endonuclease activity cleaving the host capped pre-mRNAs. These short capped RNAs are then used as primers for viral transcription. Cleaves ssRNA substrates but not DNA (By similarity). Seems to downregulate the expression of its own and heterologous mRNAs through its endonuclease activity (By similarity).</text>
</comment>
<comment type="catalytic activity">
    <reaction evidence="7">
        <text>RNA(n) + a ribonucleoside 5'-triphosphate = RNA(n+1) + diphosphate</text>
        <dbReference type="Rhea" id="RHEA:21248"/>
        <dbReference type="Rhea" id="RHEA-COMP:14527"/>
        <dbReference type="Rhea" id="RHEA-COMP:17342"/>
        <dbReference type="ChEBI" id="CHEBI:33019"/>
        <dbReference type="ChEBI" id="CHEBI:61557"/>
        <dbReference type="ChEBI" id="CHEBI:140395"/>
        <dbReference type="EC" id="2.7.7.48"/>
    </reaction>
</comment>
<comment type="cofactor">
    <cofactor evidence="3">
        <name>Mn(2+)</name>
        <dbReference type="ChEBI" id="CHEBI:29035"/>
    </cofactor>
    <text evidence="3 8">For endonuclease activity. Binds 2 Mn(2+) ions in the active site. The divalent metal ions are crucial for catalytic activity (PubMed:31948728).</text>
</comment>
<comment type="cofactor">
    <cofactor evidence="1">
        <name>Mg(2+)</name>
        <dbReference type="ChEBI" id="CHEBI:18420"/>
    </cofactor>
    <cofactor evidence="1">
        <name>Mn(2+)</name>
        <dbReference type="ChEBI" id="CHEBI:29035"/>
    </cofactor>
    <text evidence="1">For polymerase activity.</text>
</comment>
<comment type="subunit">
    <text evidence="4">Interacts with the viral nucleoprotein.</text>
</comment>
<comment type="subcellular location">
    <subcellularLocation>
        <location evidence="6">Host cytoplasm</location>
        <location evidence="6">Host perinuclear region</location>
    </subcellularLocation>
</comment>
<comment type="domain">
    <text evidence="1 2 5">The N-terminus contains the endonuclease activity (endoN) (By similarity). The central region contains the RdRp activity (By similarity). The C-terminus contains the cap-binding region (By similarity).</text>
</comment>
<comment type="miscellaneous">
    <text evidence="9">Classified as His(+) endonuclease since it has a histidine upstream of the active site that coordinates the first cation.</text>
</comment>
<comment type="similarity">
    <text evidence="10">Belongs to the Bunyavirales RNA polymerase family.</text>
</comment>
<evidence type="ECO:0000250" key="1">
    <source>
        <dbReference type="UniProtKB" id="A2SZS3"/>
    </source>
</evidence>
<evidence type="ECO:0000250" key="2">
    <source>
        <dbReference type="UniProtKB" id="I0DF35"/>
    </source>
</evidence>
<evidence type="ECO:0000250" key="3">
    <source>
        <dbReference type="UniProtKB" id="P23456"/>
    </source>
</evidence>
<evidence type="ECO:0000250" key="4">
    <source>
        <dbReference type="UniProtKB" id="Q89709"/>
    </source>
</evidence>
<evidence type="ECO:0000250" key="5">
    <source>
        <dbReference type="UniProtKB" id="Q9E005"/>
    </source>
</evidence>
<evidence type="ECO:0000250" key="6">
    <source>
        <dbReference type="UniProtKB" id="Q9YQR5"/>
    </source>
</evidence>
<evidence type="ECO:0000255" key="7">
    <source>
        <dbReference type="PROSITE-ProRule" id="PRU00539"/>
    </source>
</evidence>
<evidence type="ECO:0000269" key="8">
    <source>
    </source>
</evidence>
<evidence type="ECO:0000303" key="9">
    <source>
    </source>
</evidence>
<evidence type="ECO:0000305" key="10"/>